<feature type="chain" id="PRO_0000271280" description="Monothiol glutaredoxin-S11">
    <location>
        <begin position="1"/>
        <end position="491"/>
    </location>
</feature>
<feature type="domain" description="Glutaredoxin 1" evidence="2">
    <location>
        <begin position="151"/>
        <end position="253"/>
    </location>
</feature>
<feature type="domain" description="Glutaredoxin 2" evidence="2">
    <location>
        <begin position="287"/>
        <end position="389"/>
    </location>
</feature>
<feature type="domain" description="Glutaredoxin 3" evidence="2">
    <location>
        <begin position="394"/>
        <end position="491"/>
    </location>
</feature>
<feature type="binding site" evidence="1">
    <location>
        <position position="411"/>
    </location>
    <ligand>
        <name>glutathione</name>
        <dbReference type="ChEBI" id="CHEBI:57925"/>
    </ligand>
</feature>
<feature type="binding site" evidence="1">
    <location>
        <position position="419"/>
    </location>
    <ligand>
        <name>[2Fe-2S] cluster</name>
        <dbReference type="ChEBI" id="CHEBI:190135"/>
        <note>ligand shared between dimeric partners</note>
    </ligand>
</feature>
<feature type="binding site" evidence="1">
    <location>
        <position position="448"/>
    </location>
    <ligand>
        <name>glutathione</name>
        <dbReference type="ChEBI" id="CHEBI:57925"/>
    </ligand>
</feature>
<feature type="binding site" evidence="1">
    <location>
        <position position="460"/>
    </location>
    <ligand>
        <name>glutathione</name>
        <dbReference type="ChEBI" id="CHEBI:57925"/>
    </ligand>
</feature>
<feature type="binding site" evidence="1">
    <location>
        <begin position="473"/>
        <end position="474"/>
    </location>
    <ligand>
        <name>glutathione</name>
        <dbReference type="ChEBI" id="CHEBI:57925"/>
    </ligand>
</feature>
<gene>
    <name type="primary">GRXS11</name>
    <name type="ordered locus">Os10g0500700</name>
    <name type="ordered locus">LOC_Os10g35720</name>
    <name evidence="4" type="ORF">OsJ_32056</name>
    <name type="ORF">OSJNBa0078O01.9</name>
</gene>
<keyword id="KW-0001">2Fe-2S</keyword>
<keyword id="KW-0963">Cytoplasm</keyword>
<keyword id="KW-0408">Iron</keyword>
<keyword id="KW-0411">Iron-sulfur</keyword>
<keyword id="KW-0479">Metal-binding</keyword>
<keyword id="KW-0676">Redox-active center</keyword>
<keyword id="KW-1185">Reference proteome</keyword>
<keyword id="KW-0677">Repeat</keyword>
<name>GRS11_ORYSJ</name>
<comment type="function">
    <text evidence="3">May only reduce GSH-thiol disulfides, but not protein disulfides.</text>
</comment>
<comment type="subcellular location">
    <subcellularLocation>
        <location evidence="1">Cytoplasm</location>
    </subcellularLocation>
</comment>
<comment type="similarity">
    <text evidence="3">Belongs to the glutaredoxin family. CGFS subfamily.</text>
</comment>
<comment type="sequence caution" evidence="3">
    <conflict type="erroneous gene model prediction">
        <sequence resource="EMBL-CDS" id="ABB47838"/>
    </conflict>
</comment>
<comment type="sequence caution" evidence="3">
    <conflict type="erroneous gene model prediction">
        <sequence resource="EMBL-CDS" id="BAF26896"/>
    </conflict>
</comment>
<sequence length="491" mass="53155">MAAVREVGSKAELEAAAGGARAAAVHFWAAWCEASKQMDEVFAHLAVDFSHAVFLRVEAEEQPEISEAYGVTAVPYFVFLKEGKTVDTLEGANPASLANKVAKLAGPASVAESAVPASLGVAAGPAVLEKVQEMAQQNGASATSSAEDALNKRLEQLVNSHPVFLFMKGTPEQPRCGFSRKVVDVLKQEGVEFGSFDILTDNDVREGMKKFSNWPTFPQLYCKGELLGGCDIVIAMHESGELKDVFKEHNIPLQPQGSKNEEAVKAKPDTEKSGAVSEPALLTAAQKERLESLVNFSTVMAFIKGTPEEPKCGFSGKLVHILKQEKIPFSSFDILTDDEVRQGLKLLSNWPSYPQLYINGELVGGSDIVMEMHKSGELKKVLSEKGIVAKESLEDRLKALISSAPVMLFMKGTPDAPRCGFSSKVVNALKQAGVSFGAFDILSDEEVRQGLKTYSNWPTFPQLYYKSELIGGCDIVLELEKSGELKSTLSE</sequence>
<accession>Q0IWL9</accession>
<accession>A3C671</accession>
<accession>Q337G2</accession>
<accession>Q8LNG2</accession>
<protein>
    <recommendedName>
        <fullName>Monothiol glutaredoxin-S11</fullName>
    </recommendedName>
</protein>
<reference key="1">
    <citation type="journal article" date="2003" name="Science">
        <title>In-depth view of structure, activity, and evolution of rice chromosome 10.</title>
        <authorList>
            <person name="Yu Y."/>
            <person name="Rambo T."/>
            <person name="Currie J."/>
            <person name="Saski C."/>
            <person name="Kim H.-R."/>
            <person name="Collura K."/>
            <person name="Thompson S."/>
            <person name="Simmons J."/>
            <person name="Yang T.-J."/>
            <person name="Nah G."/>
            <person name="Patel A.J."/>
            <person name="Thurmond S."/>
            <person name="Henry D."/>
            <person name="Oates R."/>
            <person name="Palmer M."/>
            <person name="Pries G."/>
            <person name="Gibson J."/>
            <person name="Anderson H."/>
            <person name="Paradkar M."/>
            <person name="Crane L."/>
            <person name="Dale J."/>
            <person name="Carver M.B."/>
            <person name="Wood T."/>
            <person name="Frisch D."/>
            <person name="Engler F."/>
            <person name="Soderlund C."/>
            <person name="Palmer L.E."/>
            <person name="Teytelman L."/>
            <person name="Nascimento L."/>
            <person name="De la Bastide M."/>
            <person name="Spiegel L."/>
            <person name="Ware D."/>
            <person name="O'Shaughnessy A."/>
            <person name="Dike S."/>
            <person name="Dedhia N."/>
            <person name="Preston R."/>
            <person name="Huang E."/>
            <person name="Ferraro K."/>
            <person name="Kuit K."/>
            <person name="Miller B."/>
            <person name="Zutavern T."/>
            <person name="Katzenberger F."/>
            <person name="Muller S."/>
            <person name="Balija V."/>
            <person name="Martienssen R.A."/>
            <person name="Stein L."/>
            <person name="Minx P."/>
            <person name="Johnson D."/>
            <person name="Cordum H."/>
            <person name="Mardis E."/>
            <person name="Cheng Z."/>
            <person name="Jiang J."/>
            <person name="Wilson R."/>
            <person name="McCombie W.R."/>
            <person name="Wing R.A."/>
            <person name="Yuan Q."/>
            <person name="Ouyang S."/>
            <person name="Liu J."/>
            <person name="Jones K.M."/>
            <person name="Gansberger K."/>
            <person name="Moffat K."/>
            <person name="Hill J."/>
            <person name="Tsitrin T."/>
            <person name="Overton L."/>
            <person name="Bera J."/>
            <person name="Kim M."/>
            <person name="Jin S."/>
            <person name="Tallon L."/>
            <person name="Ciecko A."/>
            <person name="Pai G."/>
            <person name="Van Aken S."/>
            <person name="Utterback T."/>
            <person name="Reidmuller S."/>
            <person name="Bormann J."/>
            <person name="Feldblyum T."/>
            <person name="Hsiao J."/>
            <person name="Zismann V."/>
            <person name="Blunt S."/>
            <person name="de Vazeille A.R."/>
            <person name="Shaffer T."/>
            <person name="Koo H."/>
            <person name="Suh B."/>
            <person name="Yang Q."/>
            <person name="Haas B."/>
            <person name="Peterson J."/>
            <person name="Pertea M."/>
            <person name="Volfovsky N."/>
            <person name="Wortman J."/>
            <person name="White O."/>
            <person name="Salzberg S.L."/>
            <person name="Fraser C.M."/>
            <person name="Buell C.R."/>
            <person name="Messing J."/>
            <person name="Song R."/>
            <person name="Fuks G."/>
            <person name="Llaca V."/>
            <person name="Kovchak S."/>
            <person name="Young S."/>
            <person name="Bowers J.E."/>
            <person name="Paterson A.H."/>
            <person name="Johns M.A."/>
            <person name="Mao L."/>
            <person name="Pan H."/>
            <person name="Dean R.A."/>
        </authorList>
    </citation>
    <scope>NUCLEOTIDE SEQUENCE [LARGE SCALE GENOMIC DNA]</scope>
    <source>
        <strain>cv. Nipponbare</strain>
    </source>
</reference>
<reference key="2">
    <citation type="journal article" date="2005" name="Nature">
        <title>The map-based sequence of the rice genome.</title>
        <authorList>
            <consortium name="International rice genome sequencing project (IRGSP)"/>
        </authorList>
    </citation>
    <scope>NUCLEOTIDE SEQUENCE [LARGE SCALE GENOMIC DNA]</scope>
    <source>
        <strain>cv. Nipponbare</strain>
    </source>
</reference>
<reference key="3">
    <citation type="journal article" date="2008" name="Nucleic Acids Res.">
        <title>The rice annotation project database (RAP-DB): 2008 update.</title>
        <authorList>
            <consortium name="The rice annotation project (RAP)"/>
        </authorList>
    </citation>
    <scope>GENOME REANNOTATION</scope>
    <source>
        <strain>cv. Nipponbare</strain>
    </source>
</reference>
<reference key="4">
    <citation type="journal article" date="2013" name="Rice">
        <title>Improvement of the Oryza sativa Nipponbare reference genome using next generation sequence and optical map data.</title>
        <authorList>
            <person name="Kawahara Y."/>
            <person name="de la Bastide M."/>
            <person name="Hamilton J.P."/>
            <person name="Kanamori H."/>
            <person name="McCombie W.R."/>
            <person name="Ouyang S."/>
            <person name="Schwartz D.C."/>
            <person name="Tanaka T."/>
            <person name="Wu J."/>
            <person name="Zhou S."/>
            <person name="Childs K.L."/>
            <person name="Davidson R.M."/>
            <person name="Lin H."/>
            <person name="Quesada-Ocampo L."/>
            <person name="Vaillancourt B."/>
            <person name="Sakai H."/>
            <person name="Lee S.S."/>
            <person name="Kim J."/>
            <person name="Numa H."/>
            <person name="Itoh T."/>
            <person name="Buell C.R."/>
            <person name="Matsumoto T."/>
        </authorList>
    </citation>
    <scope>GENOME REANNOTATION</scope>
    <source>
        <strain>cv. Nipponbare</strain>
    </source>
</reference>
<reference key="5">
    <citation type="journal article" date="2005" name="PLoS Biol.">
        <title>The genomes of Oryza sativa: a history of duplications.</title>
        <authorList>
            <person name="Yu J."/>
            <person name="Wang J."/>
            <person name="Lin W."/>
            <person name="Li S."/>
            <person name="Li H."/>
            <person name="Zhou J."/>
            <person name="Ni P."/>
            <person name="Dong W."/>
            <person name="Hu S."/>
            <person name="Zeng C."/>
            <person name="Zhang J."/>
            <person name="Zhang Y."/>
            <person name="Li R."/>
            <person name="Xu Z."/>
            <person name="Li S."/>
            <person name="Li X."/>
            <person name="Zheng H."/>
            <person name="Cong L."/>
            <person name="Lin L."/>
            <person name="Yin J."/>
            <person name="Geng J."/>
            <person name="Li G."/>
            <person name="Shi J."/>
            <person name="Liu J."/>
            <person name="Lv H."/>
            <person name="Li J."/>
            <person name="Wang J."/>
            <person name="Deng Y."/>
            <person name="Ran L."/>
            <person name="Shi X."/>
            <person name="Wang X."/>
            <person name="Wu Q."/>
            <person name="Li C."/>
            <person name="Ren X."/>
            <person name="Wang J."/>
            <person name="Wang X."/>
            <person name="Li D."/>
            <person name="Liu D."/>
            <person name="Zhang X."/>
            <person name="Ji Z."/>
            <person name="Zhao W."/>
            <person name="Sun Y."/>
            <person name="Zhang Z."/>
            <person name="Bao J."/>
            <person name="Han Y."/>
            <person name="Dong L."/>
            <person name="Ji J."/>
            <person name="Chen P."/>
            <person name="Wu S."/>
            <person name="Liu J."/>
            <person name="Xiao Y."/>
            <person name="Bu D."/>
            <person name="Tan J."/>
            <person name="Yang L."/>
            <person name="Ye C."/>
            <person name="Zhang J."/>
            <person name="Xu J."/>
            <person name="Zhou Y."/>
            <person name="Yu Y."/>
            <person name="Zhang B."/>
            <person name="Zhuang S."/>
            <person name="Wei H."/>
            <person name="Liu B."/>
            <person name="Lei M."/>
            <person name="Yu H."/>
            <person name="Li Y."/>
            <person name="Xu H."/>
            <person name="Wei S."/>
            <person name="He X."/>
            <person name="Fang L."/>
            <person name="Zhang Z."/>
            <person name="Zhang Y."/>
            <person name="Huang X."/>
            <person name="Su Z."/>
            <person name="Tong W."/>
            <person name="Li J."/>
            <person name="Tong Z."/>
            <person name="Li S."/>
            <person name="Ye J."/>
            <person name="Wang L."/>
            <person name="Fang L."/>
            <person name="Lei T."/>
            <person name="Chen C.-S."/>
            <person name="Chen H.-C."/>
            <person name="Xu Z."/>
            <person name="Li H."/>
            <person name="Huang H."/>
            <person name="Zhang F."/>
            <person name="Xu H."/>
            <person name="Li N."/>
            <person name="Zhao C."/>
            <person name="Li S."/>
            <person name="Dong L."/>
            <person name="Huang Y."/>
            <person name="Li L."/>
            <person name="Xi Y."/>
            <person name="Qi Q."/>
            <person name="Li W."/>
            <person name="Zhang B."/>
            <person name="Hu W."/>
            <person name="Zhang Y."/>
            <person name="Tian X."/>
            <person name="Jiao Y."/>
            <person name="Liang X."/>
            <person name="Jin J."/>
            <person name="Gao L."/>
            <person name="Zheng W."/>
            <person name="Hao B."/>
            <person name="Liu S.-M."/>
            <person name="Wang W."/>
            <person name="Yuan L."/>
            <person name="Cao M."/>
            <person name="McDermott J."/>
            <person name="Samudrala R."/>
            <person name="Wang J."/>
            <person name="Wong G.K.-S."/>
            <person name="Yang H."/>
        </authorList>
    </citation>
    <scope>NUCLEOTIDE SEQUENCE [LARGE SCALE GENOMIC DNA]</scope>
    <source>
        <strain>cv. Nipponbare</strain>
    </source>
</reference>
<reference key="6">
    <citation type="journal article" date="2003" name="Science">
        <title>Collection, mapping, and annotation of over 28,000 cDNA clones from japonica rice.</title>
        <authorList>
            <consortium name="The rice full-length cDNA consortium"/>
        </authorList>
    </citation>
    <scope>NUCLEOTIDE SEQUENCE [LARGE SCALE MRNA]</scope>
    <source>
        <strain>cv. Nipponbare</strain>
    </source>
</reference>
<reference key="7">
    <citation type="journal article" date="2006" name="J. Exp. Bot.">
        <title>Genome-wide analysis of plant glutaredoxin systems.</title>
        <authorList>
            <person name="Rouhier N."/>
            <person name="Couturier J."/>
            <person name="Jacquot J.-P."/>
        </authorList>
    </citation>
    <scope>GENE FAMILY</scope>
</reference>
<organism>
    <name type="scientific">Oryza sativa subsp. japonica</name>
    <name type="common">Rice</name>
    <dbReference type="NCBI Taxonomy" id="39947"/>
    <lineage>
        <taxon>Eukaryota</taxon>
        <taxon>Viridiplantae</taxon>
        <taxon>Streptophyta</taxon>
        <taxon>Embryophyta</taxon>
        <taxon>Tracheophyta</taxon>
        <taxon>Spermatophyta</taxon>
        <taxon>Magnoliopsida</taxon>
        <taxon>Liliopsida</taxon>
        <taxon>Poales</taxon>
        <taxon>Poaceae</taxon>
        <taxon>BOP clade</taxon>
        <taxon>Oryzoideae</taxon>
        <taxon>Oryzeae</taxon>
        <taxon>Oryzinae</taxon>
        <taxon>Oryza</taxon>
        <taxon>Oryza sativa</taxon>
    </lineage>
</organism>
<proteinExistence type="evidence at transcript level"/>
<evidence type="ECO:0000250" key="1"/>
<evidence type="ECO:0000255" key="2">
    <source>
        <dbReference type="PROSITE-ProRule" id="PRU00686"/>
    </source>
</evidence>
<evidence type="ECO:0000305" key="3"/>
<evidence type="ECO:0000312" key="4">
    <source>
        <dbReference type="EMBL" id="EAZ16584.1"/>
    </source>
</evidence>
<dbReference type="EMBL" id="AC079888">
    <property type="protein sequence ID" value="AAM93692.1"/>
    <property type="molecule type" value="Genomic_DNA"/>
</dbReference>
<dbReference type="EMBL" id="DP000086">
    <property type="protein sequence ID" value="AAP54473.1"/>
    <property type="molecule type" value="Genomic_DNA"/>
</dbReference>
<dbReference type="EMBL" id="DP000086">
    <property type="protein sequence ID" value="ABB47838.1"/>
    <property type="status" value="ALT_SEQ"/>
    <property type="molecule type" value="Genomic_DNA"/>
</dbReference>
<dbReference type="EMBL" id="AP008216">
    <property type="protein sequence ID" value="BAF26896.1"/>
    <property type="status" value="ALT_SEQ"/>
    <property type="molecule type" value="Genomic_DNA"/>
</dbReference>
<dbReference type="EMBL" id="AP014966">
    <property type="protein sequence ID" value="BAT11525.1"/>
    <property type="molecule type" value="Genomic_DNA"/>
</dbReference>
<dbReference type="EMBL" id="CM000147">
    <property type="protein sequence ID" value="EAZ16584.1"/>
    <property type="molecule type" value="Genomic_DNA"/>
</dbReference>
<dbReference type="EMBL" id="AK059628">
    <property type="protein sequence ID" value="BAG87058.1"/>
    <property type="molecule type" value="mRNA"/>
</dbReference>
<dbReference type="EMBL" id="AK067982">
    <property type="protein sequence ID" value="BAG90695.1"/>
    <property type="molecule type" value="mRNA"/>
</dbReference>
<dbReference type="SMR" id="Q0IWL9"/>
<dbReference type="FunCoup" id="Q0IWL9">
    <property type="interactions" value="2664"/>
</dbReference>
<dbReference type="STRING" id="39947.Q0IWL9"/>
<dbReference type="PaxDb" id="39947-Q0IWL9"/>
<dbReference type="EnsemblPlants" id="Os10t0500700-01">
    <property type="protein sequence ID" value="Os10t0500700-01"/>
    <property type="gene ID" value="Os10g0500700"/>
</dbReference>
<dbReference type="Gramene" id="Os10t0500700-01">
    <property type="protein sequence ID" value="Os10t0500700-01"/>
    <property type="gene ID" value="Os10g0500700"/>
</dbReference>
<dbReference type="KEGG" id="dosa:Os10g0500700"/>
<dbReference type="eggNOG" id="KOG0911">
    <property type="taxonomic scope" value="Eukaryota"/>
</dbReference>
<dbReference type="HOGENOM" id="CLU_026126_12_2_1"/>
<dbReference type="InParanoid" id="Q0IWL9"/>
<dbReference type="OMA" id="HDIVMEL"/>
<dbReference type="OrthoDB" id="415696at2759"/>
<dbReference type="Proteomes" id="UP000000763">
    <property type="component" value="Chromosome 10"/>
</dbReference>
<dbReference type="Proteomes" id="UP000007752">
    <property type="component" value="Chromosome 10"/>
</dbReference>
<dbReference type="Proteomes" id="UP000059680">
    <property type="component" value="Chromosome 10"/>
</dbReference>
<dbReference type="ExpressionAtlas" id="Q0IWL9">
    <property type="expression patterns" value="baseline and differential"/>
</dbReference>
<dbReference type="GO" id="GO:0005829">
    <property type="term" value="C:cytosol"/>
    <property type="evidence" value="ECO:0000318"/>
    <property type="project" value="GO_Central"/>
</dbReference>
<dbReference type="GO" id="GO:0005634">
    <property type="term" value="C:nucleus"/>
    <property type="evidence" value="ECO:0000318"/>
    <property type="project" value="GO_Central"/>
</dbReference>
<dbReference type="GO" id="GO:0051537">
    <property type="term" value="F:2 iron, 2 sulfur cluster binding"/>
    <property type="evidence" value="ECO:0007669"/>
    <property type="project" value="UniProtKB-KW"/>
</dbReference>
<dbReference type="GO" id="GO:0046872">
    <property type="term" value="F:metal ion binding"/>
    <property type="evidence" value="ECO:0007669"/>
    <property type="project" value="UniProtKB-KW"/>
</dbReference>
<dbReference type="GO" id="GO:0006879">
    <property type="term" value="P:intracellular iron ion homeostasis"/>
    <property type="evidence" value="ECO:0000318"/>
    <property type="project" value="GO_Central"/>
</dbReference>
<dbReference type="CDD" id="cd03028">
    <property type="entry name" value="GRX_PICOT_like"/>
    <property type="match status" value="3"/>
</dbReference>
<dbReference type="CDD" id="cd02984">
    <property type="entry name" value="TRX_PICOT"/>
    <property type="match status" value="1"/>
</dbReference>
<dbReference type="FunFam" id="3.40.30.10:FF:000012">
    <property type="entry name" value="Monothiol glutaredoxin"/>
    <property type="match status" value="3"/>
</dbReference>
<dbReference type="FunFam" id="3.40.30.10:FF:000092">
    <property type="entry name" value="Monothiol glutaredoxin"/>
    <property type="match status" value="1"/>
</dbReference>
<dbReference type="Gene3D" id="3.40.30.10">
    <property type="entry name" value="Glutaredoxin"/>
    <property type="match status" value="4"/>
</dbReference>
<dbReference type="InterPro" id="IPR002109">
    <property type="entry name" value="Glutaredoxin"/>
</dbReference>
<dbReference type="InterPro" id="IPR033658">
    <property type="entry name" value="GRX_PICOT-like"/>
</dbReference>
<dbReference type="InterPro" id="IPR004480">
    <property type="entry name" value="Monothiol_GRX-rel"/>
</dbReference>
<dbReference type="InterPro" id="IPR036249">
    <property type="entry name" value="Thioredoxin-like_sf"/>
</dbReference>
<dbReference type="InterPro" id="IPR013766">
    <property type="entry name" value="Thioredoxin_domain"/>
</dbReference>
<dbReference type="NCBIfam" id="TIGR00365">
    <property type="entry name" value="Grx4 family monothiol glutaredoxin"/>
    <property type="match status" value="2"/>
</dbReference>
<dbReference type="PANTHER" id="PTHR10293">
    <property type="entry name" value="GLUTAREDOXIN FAMILY MEMBER"/>
    <property type="match status" value="1"/>
</dbReference>
<dbReference type="PANTHER" id="PTHR10293:SF73">
    <property type="entry name" value="GLUTAREDOXIN-3"/>
    <property type="match status" value="1"/>
</dbReference>
<dbReference type="Pfam" id="PF00462">
    <property type="entry name" value="Glutaredoxin"/>
    <property type="match status" value="3"/>
</dbReference>
<dbReference type="Pfam" id="PF00085">
    <property type="entry name" value="Thioredoxin"/>
    <property type="match status" value="1"/>
</dbReference>
<dbReference type="SUPFAM" id="SSF52833">
    <property type="entry name" value="Thioredoxin-like"/>
    <property type="match status" value="4"/>
</dbReference>
<dbReference type="PROSITE" id="PS51354">
    <property type="entry name" value="GLUTAREDOXIN_2"/>
    <property type="match status" value="3"/>
</dbReference>
<dbReference type="PROSITE" id="PS51352">
    <property type="entry name" value="THIOREDOXIN_2"/>
    <property type="match status" value="1"/>
</dbReference>